<accession>Q4QLT8</accession>
<protein>
    <recommendedName>
        <fullName evidence="1">3-dehydroquinate dehydratase</fullName>
        <shortName evidence="1">3-dehydroquinase</shortName>
        <ecNumber evidence="1">4.2.1.10</ecNumber>
    </recommendedName>
    <alternativeName>
        <fullName evidence="1">Type II DHQase</fullName>
    </alternativeName>
</protein>
<dbReference type="EC" id="4.2.1.10" evidence="1"/>
<dbReference type="EMBL" id="CP000057">
    <property type="protein sequence ID" value="AAX88009.1"/>
    <property type="molecule type" value="Genomic_DNA"/>
</dbReference>
<dbReference type="RefSeq" id="WP_011272319.1">
    <property type="nucleotide sequence ID" value="NC_007146.2"/>
</dbReference>
<dbReference type="SMR" id="Q4QLT8"/>
<dbReference type="KEGG" id="hit:NTHI1143"/>
<dbReference type="HOGENOM" id="CLU_090968_1_0_6"/>
<dbReference type="UniPathway" id="UPA00053">
    <property type="reaction ID" value="UER00086"/>
</dbReference>
<dbReference type="Proteomes" id="UP000002525">
    <property type="component" value="Chromosome"/>
</dbReference>
<dbReference type="GO" id="GO:0003855">
    <property type="term" value="F:3-dehydroquinate dehydratase activity"/>
    <property type="evidence" value="ECO:0007669"/>
    <property type="project" value="UniProtKB-UniRule"/>
</dbReference>
<dbReference type="GO" id="GO:0008652">
    <property type="term" value="P:amino acid biosynthetic process"/>
    <property type="evidence" value="ECO:0007669"/>
    <property type="project" value="UniProtKB-KW"/>
</dbReference>
<dbReference type="GO" id="GO:0009073">
    <property type="term" value="P:aromatic amino acid family biosynthetic process"/>
    <property type="evidence" value="ECO:0007669"/>
    <property type="project" value="UniProtKB-KW"/>
</dbReference>
<dbReference type="GO" id="GO:0009423">
    <property type="term" value="P:chorismate biosynthetic process"/>
    <property type="evidence" value="ECO:0007669"/>
    <property type="project" value="UniProtKB-UniRule"/>
</dbReference>
<dbReference type="GO" id="GO:0019631">
    <property type="term" value="P:quinate catabolic process"/>
    <property type="evidence" value="ECO:0007669"/>
    <property type="project" value="TreeGrafter"/>
</dbReference>
<dbReference type="CDD" id="cd00466">
    <property type="entry name" value="DHQase_II"/>
    <property type="match status" value="1"/>
</dbReference>
<dbReference type="Gene3D" id="3.40.50.9100">
    <property type="entry name" value="Dehydroquinase, class II"/>
    <property type="match status" value="1"/>
</dbReference>
<dbReference type="HAMAP" id="MF_00169">
    <property type="entry name" value="AroQ"/>
    <property type="match status" value="1"/>
</dbReference>
<dbReference type="InterPro" id="IPR001874">
    <property type="entry name" value="DHquinase_II"/>
</dbReference>
<dbReference type="InterPro" id="IPR018509">
    <property type="entry name" value="DHquinase_II_CS"/>
</dbReference>
<dbReference type="InterPro" id="IPR036441">
    <property type="entry name" value="DHquinase_II_sf"/>
</dbReference>
<dbReference type="NCBIfam" id="TIGR01088">
    <property type="entry name" value="aroQ"/>
    <property type="match status" value="1"/>
</dbReference>
<dbReference type="NCBIfam" id="NF003804">
    <property type="entry name" value="PRK05395.1-1"/>
    <property type="match status" value="1"/>
</dbReference>
<dbReference type="NCBIfam" id="NF003805">
    <property type="entry name" value="PRK05395.1-2"/>
    <property type="match status" value="1"/>
</dbReference>
<dbReference type="NCBIfam" id="NF003806">
    <property type="entry name" value="PRK05395.1-3"/>
    <property type="match status" value="1"/>
</dbReference>
<dbReference type="NCBIfam" id="NF003807">
    <property type="entry name" value="PRK05395.1-4"/>
    <property type="match status" value="1"/>
</dbReference>
<dbReference type="PANTHER" id="PTHR21272">
    <property type="entry name" value="CATABOLIC 3-DEHYDROQUINASE"/>
    <property type="match status" value="1"/>
</dbReference>
<dbReference type="PANTHER" id="PTHR21272:SF3">
    <property type="entry name" value="CATABOLIC 3-DEHYDROQUINASE"/>
    <property type="match status" value="1"/>
</dbReference>
<dbReference type="Pfam" id="PF01220">
    <property type="entry name" value="DHquinase_II"/>
    <property type="match status" value="1"/>
</dbReference>
<dbReference type="PIRSF" id="PIRSF001399">
    <property type="entry name" value="DHquinase_II"/>
    <property type="match status" value="1"/>
</dbReference>
<dbReference type="SUPFAM" id="SSF52304">
    <property type="entry name" value="Type II 3-dehydroquinate dehydratase"/>
    <property type="match status" value="1"/>
</dbReference>
<dbReference type="PROSITE" id="PS01029">
    <property type="entry name" value="DEHYDROQUINASE_II"/>
    <property type="match status" value="1"/>
</dbReference>
<keyword id="KW-0028">Amino-acid biosynthesis</keyword>
<keyword id="KW-0057">Aromatic amino acid biosynthesis</keyword>
<keyword id="KW-0456">Lyase</keyword>
<organism>
    <name type="scientific">Haemophilus influenzae (strain 86-028NP)</name>
    <dbReference type="NCBI Taxonomy" id="281310"/>
    <lineage>
        <taxon>Bacteria</taxon>
        <taxon>Pseudomonadati</taxon>
        <taxon>Pseudomonadota</taxon>
        <taxon>Gammaproteobacteria</taxon>
        <taxon>Pasteurellales</taxon>
        <taxon>Pasteurellaceae</taxon>
        <taxon>Haemophilus</taxon>
    </lineage>
</organism>
<name>AROQ_HAEI8</name>
<evidence type="ECO:0000255" key="1">
    <source>
        <dbReference type="HAMAP-Rule" id="MF_00169"/>
    </source>
</evidence>
<comment type="function">
    <text evidence="1">Catalyzes a trans-dehydration via an enolate intermediate.</text>
</comment>
<comment type="catalytic activity">
    <reaction evidence="1">
        <text>3-dehydroquinate = 3-dehydroshikimate + H2O</text>
        <dbReference type="Rhea" id="RHEA:21096"/>
        <dbReference type="ChEBI" id="CHEBI:15377"/>
        <dbReference type="ChEBI" id="CHEBI:16630"/>
        <dbReference type="ChEBI" id="CHEBI:32364"/>
        <dbReference type="EC" id="4.2.1.10"/>
    </reaction>
</comment>
<comment type="pathway">
    <text evidence="1">Metabolic intermediate biosynthesis; chorismate biosynthesis; chorismate from D-erythrose 4-phosphate and phosphoenolpyruvate: step 3/7.</text>
</comment>
<comment type="subunit">
    <text evidence="1">Homododecamer.</text>
</comment>
<comment type="similarity">
    <text evidence="1">Belongs to the type-II 3-dehydroquinase family.</text>
</comment>
<feature type="chain" id="PRO_1000023468" description="3-dehydroquinate dehydratase">
    <location>
        <begin position="1"/>
        <end position="149"/>
    </location>
</feature>
<feature type="active site" description="Proton acceptor" evidence="1">
    <location>
        <position position="26"/>
    </location>
</feature>
<feature type="active site" description="Proton donor" evidence="1">
    <location>
        <position position="103"/>
    </location>
</feature>
<feature type="binding site" evidence="1">
    <location>
        <position position="77"/>
    </location>
    <ligand>
        <name>substrate</name>
    </ligand>
</feature>
<feature type="binding site" evidence="1">
    <location>
        <position position="83"/>
    </location>
    <ligand>
        <name>substrate</name>
    </ligand>
</feature>
<feature type="binding site" evidence="1">
    <location>
        <position position="90"/>
    </location>
    <ligand>
        <name>substrate</name>
    </ligand>
</feature>
<feature type="binding site" evidence="1">
    <location>
        <begin position="104"/>
        <end position="105"/>
    </location>
    <ligand>
        <name>substrate</name>
    </ligand>
</feature>
<feature type="binding site" evidence="1">
    <location>
        <position position="114"/>
    </location>
    <ligand>
        <name>substrate</name>
    </ligand>
</feature>
<feature type="site" description="Transition state stabilizer" evidence="1">
    <location>
        <position position="21"/>
    </location>
</feature>
<sequence>MSQTHRILLLNGPNLNMLGAREPKHYGSISLASIEEKIQTLATQHNVKVECFQANSEEKLINKIHESFQQVDFILINPAAYTHTSVALRDALLAVSIPFVEIHLSNVHKREPFRHHSYFSDVAEGVICGLGAKGYEFAFLFAIDYLAKK</sequence>
<gene>
    <name evidence="1" type="primary">aroQ</name>
    <name type="ordered locus">NTHI1143</name>
</gene>
<reference key="1">
    <citation type="journal article" date="2005" name="J. Bacteriol.">
        <title>Genomic sequence of an otitis media isolate of nontypeable Haemophilus influenzae: comparative study with H. influenzae serotype d, strain KW20.</title>
        <authorList>
            <person name="Harrison A."/>
            <person name="Dyer D.W."/>
            <person name="Gillaspy A."/>
            <person name="Ray W.C."/>
            <person name="Mungur R."/>
            <person name="Carson M.B."/>
            <person name="Zhong H."/>
            <person name="Gipson J."/>
            <person name="Gipson M."/>
            <person name="Johnson L.S."/>
            <person name="Lewis L."/>
            <person name="Bakaletz L.O."/>
            <person name="Munson R.S. Jr."/>
        </authorList>
    </citation>
    <scope>NUCLEOTIDE SEQUENCE [LARGE SCALE GENOMIC DNA]</scope>
    <source>
        <strain>86-028NP</strain>
    </source>
</reference>
<proteinExistence type="inferred from homology"/>